<accession>P56937</accession>
<accession>Q5T246</accession>
<accession>Q7Z4V9</accession>
<accession>Q8WWS2</accession>
<accession>Q9UF00</accession>
<feature type="chain" id="PRO_0000054586" description="3-keto-steroid reductase/17-beta-hydroxysteroid dehydrogenase 7">
    <location>
        <begin position="1"/>
        <end position="341"/>
    </location>
</feature>
<feature type="topological domain" description="Extracellular" evidence="3">
    <location>
        <begin position="1"/>
        <end position="229"/>
    </location>
</feature>
<feature type="transmembrane region" description="Helical" evidence="3">
    <location>
        <begin position="230"/>
        <end position="250"/>
    </location>
</feature>
<feature type="topological domain" description="Cytoplasmic" evidence="3">
    <location>
        <begin position="251"/>
        <end position="341"/>
    </location>
</feature>
<feature type="active site" description="Proton acceptor" evidence="1">
    <location>
        <position position="193"/>
    </location>
</feature>
<feature type="binding site" evidence="3">
    <location>
        <begin position="8"/>
        <end position="15"/>
    </location>
    <ligand>
        <name>NAD(+)</name>
        <dbReference type="ChEBI" id="CHEBI:57540"/>
    </ligand>
</feature>
<feature type="binding site" evidence="1">
    <location>
        <position position="171"/>
    </location>
    <ligand>
        <name>substrate</name>
    </ligand>
</feature>
<feature type="glycosylation site" description="N-linked (GlcNAc...) asparagine" evidence="3">
    <location>
        <position position="37"/>
    </location>
</feature>
<feature type="glycosylation site" description="N-linked (GlcNAc...) asparagine" evidence="3">
    <location>
        <position position="178"/>
    </location>
</feature>
<feature type="glycosylation site" description="N-linked (GlcNAc...) asparagine" evidence="3">
    <location>
        <position position="229"/>
    </location>
</feature>
<feature type="splice variant" id="VSP_006029" description="In isoform 2." evidence="10">
    <location>
        <begin position="112"/>
        <end position="119"/>
    </location>
</feature>
<feature type="splice variant" id="VSP_012766" description="In isoform 3." evidence="11">
    <location>
        <begin position="215"/>
        <end position="249"/>
    </location>
</feature>
<feature type="sequence conflict" description="In Ref. 1; AAF14537." evidence="12" ref="1">
    <original>HP</original>
    <variation>PT</variation>
    <location>
        <begin position="52"/>
        <end position="53"/>
    </location>
</feature>
<feature type="sequence conflict" description="In Ref. 1; AAF14537." evidence="12" ref="1">
    <original>Q</original>
    <variation>P</variation>
    <location>
        <position position="61"/>
    </location>
</feature>
<feature type="sequence conflict" description="In Ref. 3; CAC88111." evidence="12" ref="3">
    <original>C</original>
    <variation>R</variation>
    <location>
        <position position="86"/>
    </location>
</feature>
<feature type="sequence conflict" description="In Ref. 3; CAC88111." evidence="12" ref="3">
    <original>F</original>
    <variation>L</variation>
    <location>
        <position position="105"/>
    </location>
</feature>
<feature type="sequence conflict" description="In Ref. 4; AAP97275." evidence="12" ref="4">
    <original>L</original>
    <variation>F</variation>
    <location>
        <position position="135"/>
    </location>
</feature>
<feature type="sequence conflict" description="In Ref. 4; AAP97275." evidence="12" ref="4">
    <original>HQKP</original>
    <variation>PPKA</variation>
    <location>
        <begin position="273"/>
        <end position="276"/>
    </location>
</feature>
<feature type="sequence conflict" description="In Ref. 4; AAP97275." evidence="12" ref="4">
    <original>ATTGFGRN</original>
    <variation>GTTALEEI</variation>
    <location>
        <begin position="288"/>
        <end position="295"/>
    </location>
</feature>
<protein>
    <recommendedName>
        <fullName evidence="12">3-keto-steroid reductase/17-beta-hydroxysteroid dehydrogenase 7</fullName>
    </recommendedName>
    <alternativeName>
        <fullName>17-beta-hydroxysteroid dehydrogenase 7</fullName>
        <shortName>17-beta-HSD 7</shortName>
    </alternativeName>
    <alternativeName>
        <fullName>3-keto-steroid reductase</fullName>
        <ecNumber evidence="4 7 9">1.1.1.270</ecNumber>
    </alternativeName>
    <alternativeName>
        <fullName>Dihydrotestosterone oxidoreductase</fullName>
        <ecNumber evidence="5 6 8">1.1.1.210</ecNumber>
    </alternativeName>
    <alternativeName>
        <fullName>Estradiol 17-beta-dehydrogenase 7</fullName>
        <ecNumber evidence="5 6 8">1.1.1.62</ecNumber>
    </alternativeName>
    <alternativeName>
        <fullName>Short chain dehydrogenase/reductase family 37C member 1</fullName>
    </alternativeName>
</protein>
<keyword id="KW-0025">Alternative splicing</keyword>
<keyword id="KW-0256">Endoplasmic reticulum</keyword>
<keyword id="KW-0325">Glycoprotein</keyword>
<keyword id="KW-0444">Lipid biosynthesis</keyword>
<keyword id="KW-0443">Lipid metabolism</keyword>
<keyword id="KW-0472">Membrane</keyword>
<keyword id="KW-0520">NAD</keyword>
<keyword id="KW-0521">NADP</keyword>
<keyword id="KW-0560">Oxidoreductase</keyword>
<keyword id="KW-1267">Proteomics identification</keyword>
<keyword id="KW-1185">Reference proteome</keyword>
<keyword id="KW-0752">Steroid biosynthesis</keyword>
<keyword id="KW-0812">Transmembrane</keyword>
<keyword id="KW-1133">Transmembrane helix</keyword>
<evidence type="ECO:0000250" key="1"/>
<evidence type="ECO:0000250" key="2">
    <source>
        <dbReference type="UniProtKB" id="Q62904"/>
    </source>
</evidence>
<evidence type="ECO:0000255" key="3"/>
<evidence type="ECO:0000269" key="4">
    <source>
    </source>
</evidence>
<evidence type="ECO:0000269" key="5">
    <source>
    </source>
</evidence>
<evidence type="ECO:0000269" key="6">
    <source>
    </source>
</evidence>
<evidence type="ECO:0000269" key="7">
    <source>
    </source>
</evidence>
<evidence type="ECO:0000269" key="8">
    <source>
    </source>
</evidence>
<evidence type="ECO:0000269" key="9">
    <source>
    </source>
</evidence>
<evidence type="ECO:0000303" key="10">
    <source>
    </source>
</evidence>
<evidence type="ECO:0000303" key="11">
    <source>
    </source>
</evidence>
<evidence type="ECO:0000305" key="12"/>
<evidence type="ECO:0000305" key="13">
    <source>
    </source>
</evidence>
<evidence type="ECO:0000305" key="14">
    <source>
    </source>
</evidence>
<evidence type="ECO:0000305" key="15">
    <source>
    </source>
</evidence>
<evidence type="ECO:0000305" key="16">
    <source>
    </source>
</evidence>
<evidence type="ECO:0000305" key="17">
    <source>
    </source>
</evidence>
<reference key="1">
    <citation type="journal article" date="1999" name="FEBS Lett.">
        <title>Determination of cDNA, gene structure and chromosomal localization of the novel human 17beta-hydroxysteroid dehydrogenase type 7.</title>
        <authorList>
            <person name="Krazeisen A."/>
            <person name="Breitling R."/>
            <person name="Imai K."/>
            <person name="Fritz S."/>
            <person name="Moeller G."/>
            <person name="Adamski J."/>
        </authorList>
    </citation>
    <scope>NUCLEOTIDE SEQUENCE [GENOMIC DNA / MRNA] (ISOFORMS 1 AND 2)</scope>
</reference>
<reference key="2">
    <citation type="submission" date="2000-01" db="EMBL/GenBank/DDBJ databases">
        <authorList>
            <person name="Krazeisen A."/>
            <person name="Breitling R."/>
            <person name="Imai K."/>
            <person name="Fritz S."/>
            <person name="Moeller G."/>
            <person name="Adamski J."/>
        </authorList>
    </citation>
    <scope>SEQUENCE REVISION</scope>
</reference>
<reference key="3">
    <citation type="journal article" date="2003" name="Biochem. Biophys. Res. Commun.">
        <title>Production, purification, and functional analysis of recombinant human and mouse 17beta-hydroxysteroid dehydrogenase type 7.</title>
        <authorList>
            <person name="Toern S."/>
            <person name="Nokelainen P."/>
            <person name="Kurkela R."/>
            <person name="Pulkka A."/>
            <person name="Menjivar M."/>
            <person name="Ghosh S."/>
            <person name="Coca-Prados M."/>
            <person name="Peltoketo H."/>
            <person name="Isomaa V."/>
            <person name="Vihko P."/>
        </authorList>
    </citation>
    <scope>NUCLEOTIDE SEQUENCE [GENOMIC DNA / MRNA] (ISOFORMS 1 AND 3)</scope>
    <scope>CATALYTIC ACTIVITY</scope>
    <scope>FUNCTION</scope>
    <scope>TISSUE SPECIFICITY</scope>
    <scope>BIOPHYSICOCHEMICAL PROPERTIES</scope>
    <source>
        <tissue>Placenta</tissue>
    </source>
</reference>
<reference key="4">
    <citation type="submission" date="1999-04" db="EMBL/GenBank/DDBJ databases">
        <title>Cloning of a new human cDNA homologous to Rattus norvegicus ovarian-specific protein.</title>
        <authorList>
            <person name="Zhou Y."/>
            <person name="Yu L."/>
            <person name="Zhao S.Y."/>
        </authorList>
    </citation>
    <scope>NUCLEOTIDE SEQUENCE [MRNA] (ISOFORM 1)</scope>
</reference>
<reference key="5">
    <citation type="journal article" date="2003" name="Genome Res.">
        <title>The secreted protein discovery initiative (SPDI), a large-scale effort to identify novel human secreted and transmembrane proteins: a bioinformatics assessment.</title>
        <authorList>
            <person name="Clark H.F."/>
            <person name="Gurney A.L."/>
            <person name="Abaya E."/>
            <person name="Baker K."/>
            <person name="Baldwin D.T."/>
            <person name="Brush J."/>
            <person name="Chen J."/>
            <person name="Chow B."/>
            <person name="Chui C."/>
            <person name="Crowley C."/>
            <person name="Currell B."/>
            <person name="Deuel B."/>
            <person name="Dowd P."/>
            <person name="Eaton D."/>
            <person name="Foster J.S."/>
            <person name="Grimaldi C."/>
            <person name="Gu Q."/>
            <person name="Hass P.E."/>
            <person name="Heldens S."/>
            <person name="Huang A."/>
            <person name="Kim H.S."/>
            <person name="Klimowski L."/>
            <person name="Jin Y."/>
            <person name="Johnson S."/>
            <person name="Lee J."/>
            <person name="Lewis L."/>
            <person name="Liao D."/>
            <person name="Mark M.R."/>
            <person name="Robbie E."/>
            <person name="Sanchez C."/>
            <person name="Schoenfeld J."/>
            <person name="Seshagiri S."/>
            <person name="Simmons L."/>
            <person name="Singh J."/>
            <person name="Smith V."/>
            <person name="Stinson J."/>
            <person name="Vagts A."/>
            <person name="Vandlen R.L."/>
            <person name="Watanabe C."/>
            <person name="Wieand D."/>
            <person name="Woods K."/>
            <person name="Xie M.-H."/>
            <person name="Yansura D.G."/>
            <person name="Yi S."/>
            <person name="Yu G."/>
            <person name="Yuan J."/>
            <person name="Zhang M."/>
            <person name="Zhang Z."/>
            <person name="Goddard A.D."/>
            <person name="Wood W.I."/>
            <person name="Godowski P.J."/>
            <person name="Gray A.M."/>
        </authorList>
    </citation>
    <scope>NUCLEOTIDE SEQUENCE [LARGE SCALE MRNA] (ISOFORM 1)</scope>
</reference>
<reference key="6">
    <citation type="journal article" date="2004" name="Nat. Genet.">
        <title>Complete sequencing and characterization of 21,243 full-length human cDNAs.</title>
        <authorList>
            <person name="Ota T."/>
            <person name="Suzuki Y."/>
            <person name="Nishikawa T."/>
            <person name="Otsuki T."/>
            <person name="Sugiyama T."/>
            <person name="Irie R."/>
            <person name="Wakamatsu A."/>
            <person name="Hayashi K."/>
            <person name="Sato H."/>
            <person name="Nagai K."/>
            <person name="Kimura K."/>
            <person name="Makita H."/>
            <person name="Sekine M."/>
            <person name="Obayashi M."/>
            <person name="Nishi T."/>
            <person name="Shibahara T."/>
            <person name="Tanaka T."/>
            <person name="Ishii S."/>
            <person name="Yamamoto J."/>
            <person name="Saito K."/>
            <person name="Kawai Y."/>
            <person name="Isono Y."/>
            <person name="Nakamura Y."/>
            <person name="Nagahari K."/>
            <person name="Murakami K."/>
            <person name="Yasuda T."/>
            <person name="Iwayanagi T."/>
            <person name="Wagatsuma M."/>
            <person name="Shiratori A."/>
            <person name="Sudo H."/>
            <person name="Hosoiri T."/>
            <person name="Kaku Y."/>
            <person name="Kodaira H."/>
            <person name="Kondo H."/>
            <person name="Sugawara M."/>
            <person name="Takahashi M."/>
            <person name="Kanda K."/>
            <person name="Yokoi T."/>
            <person name="Furuya T."/>
            <person name="Kikkawa E."/>
            <person name="Omura Y."/>
            <person name="Abe K."/>
            <person name="Kamihara K."/>
            <person name="Katsuta N."/>
            <person name="Sato K."/>
            <person name="Tanikawa M."/>
            <person name="Yamazaki M."/>
            <person name="Ninomiya K."/>
            <person name="Ishibashi T."/>
            <person name="Yamashita H."/>
            <person name="Murakawa K."/>
            <person name="Fujimori K."/>
            <person name="Tanai H."/>
            <person name="Kimata M."/>
            <person name="Watanabe M."/>
            <person name="Hiraoka S."/>
            <person name="Chiba Y."/>
            <person name="Ishida S."/>
            <person name="Ono Y."/>
            <person name="Takiguchi S."/>
            <person name="Watanabe S."/>
            <person name="Yosida M."/>
            <person name="Hotuta T."/>
            <person name="Kusano J."/>
            <person name="Kanehori K."/>
            <person name="Takahashi-Fujii A."/>
            <person name="Hara H."/>
            <person name="Tanase T.-O."/>
            <person name="Nomura Y."/>
            <person name="Togiya S."/>
            <person name="Komai F."/>
            <person name="Hara R."/>
            <person name="Takeuchi K."/>
            <person name="Arita M."/>
            <person name="Imose N."/>
            <person name="Musashino K."/>
            <person name="Yuuki H."/>
            <person name="Oshima A."/>
            <person name="Sasaki N."/>
            <person name="Aotsuka S."/>
            <person name="Yoshikawa Y."/>
            <person name="Matsunawa H."/>
            <person name="Ichihara T."/>
            <person name="Shiohata N."/>
            <person name="Sano S."/>
            <person name="Moriya S."/>
            <person name="Momiyama H."/>
            <person name="Satoh N."/>
            <person name="Takami S."/>
            <person name="Terashima Y."/>
            <person name="Suzuki O."/>
            <person name="Nakagawa S."/>
            <person name="Senoh A."/>
            <person name="Mizoguchi H."/>
            <person name="Goto Y."/>
            <person name="Shimizu F."/>
            <person name="Wakebe H."/>
            <person name="Hishigaki H."/>
            <person name="Watanabe T."/>
            <person name="Sugiyama A."/>
            <person name="Takemoto M."/>
            <person name="Kawakami B."/>
            <person name="Yamazaki M."/>
            <person name="Watanabe K."/>
            <person name="Kumagai A."/>
            <person name="Itakura S."/>
            <person name="Fukuzumi Y."/>
            <person name="Fujimori Y."/>
            <person name="Komiyama M."/>
            <person name="Tashiro H."/>
            <person name="Tanigami A."/>
            <person name="Fujiwara T."/>
            <person name="Ono T."/>
            <person name="Yamada K."/>
            <person name="Fujii Y."/>
            <person name="Ozaki K."/>
            <person name="Hirao M."/>
            <person name="Ohmori Y."/>
            <person name="Kawabata A."/>
            <person name="Hikiji T."/>
            <person name="Kobatake N."/>
            <person name="Inagaki H."/>
            <person name="Ikema Y."/>
            <person name="Okamoto S."/>
            <person name="Okitani R."/>
            <person name="Kawakami T."/>
            <person name="Noguchi S."/>
            <person name="Itoh T."/>
            <person name="Shigeta K."/>
            <person name="Senba T."/>
            <person name="Matsumura K."/>
            <person name="Nakajima Y."/>
            <person name="Mizuno T."/>
            <person name="Morinaga M."/>
            <person name="Sasaki M."/>
            <person name="Togashi T."/>
            <person name="Oyama M."/>
            <person name="Hata H."/>
            <person name="Watanabe M."/>
            <person name="Komatsu T."/>
            <person name="Mizushima-Sugano J."/>
            <person name="Satoh T."/>
            <person name="Shirai Y."/>
            <person name="Takahashi Y."/>
            <person name="Nakagawa K."/>
            <person name="Okumura K."/>
            <person name="Nagase T."/>
            <person name="Nomura N."/>
            <person name="Kikuchi H."/>
            <person name="Masuho Y."/>
            <person name="Yamashita R."/>
            <person name="Nakai K."/>
            <person name="Yada T."/>
            <person name="Nakamura Y."/>
            <person name="Ohara O."/>
            <person name="Isogai T."/>
            <person name="Sugano S."/>
        </authorList>
    </citation>
    <scope>NUCLEOTIDE SEQUENCE [LARGE SCALE MRNA]</scope>
</reference>
<reference key="7">
    <citation type="submission" date="2003-05" db="EMBL/GenBank/DDBJ databases">
        <title>Cloning of human full-length CDSs in BD Creator(TM) system donor vector.</title>
        <authorList>
            <person name="Kalnine N."/>
            <person name="Chen X."/>
            <person name="Rolfs A."/>
            <person name="Halleck A."/>
            <person name="Hines L."/>
            <person name="Eisenstein S."/>
            <person name="Koundinya M."/>
            <person name="Raphael J."/>
            <person name="Moreira D."/>
            <person name="Kelley T."/>
            <person name="LaBaer J."/>
            <person name="Lin Y."/>
            <person name="Phelan M."/>
            <person name="Farmer A."/>
        </authorList>
    </citation>
    <scope>NUCLEOTIDE SEQUENCE [LARGE SCALE MRNA] (ISOFORM 1)</scope>
</reference>
<reference key="8">
    <citation type="journal article" date="2006" name="Nature">
        <title>The DNA sequence and biological annotation of human chromosome 1.</title>
        <authorList>
            <person name="Gregory S.G."/>
            <person name="Barlow K.F."/>
            <person name="McLay K.E."/>
            <person name="Kaul R."/>
            <person name="Swarbreck D."/>
            <person name="Dunham A."/>
            <person name="Scott C.E."/>
            <person name="Howe K.L."/>
            <person name="Woodfine K."/>
            <person name="Spencer C.C.A."/>
            <person name="Jones M.C."/>
            <person name="Gillson C."/>
            <person name="Searle S."/>
            <person name="Zhou Y."/>
            <person name="Kokocinski F."/>
            <person name="McDonald L."/>
            <person name="Evans R."/>
            <person name="Phillips K."/>
            <person name="Atkinson A."/>
            <person name="Cooper R."/>
            <person name="Jones C."/>
            <person name="Hall R.E."/>
            <person name="Andrews T.D."/>
            <person name="Lloyd C."/>
            <person name="Ainscough R."/>
            <person name="Almeida J.P."/>
            <person name="Ambrose K.D."/>
            <person name="Anderson F."/>
            <person name="Andrew R.W."/>
            <person name="Ashwell R.I.S."/>
            <person name="Aubin K."/>
            <person name="Babbage A.K."/>
            <person name="Bagguley C.L."/>
            <person name="Bailey J."/>
            <person name="Beasley H."/>
            <person name="Bethel G."/>
            <person name="Bird C.P."/>
            <person name="Bray-Allen S."/>
            <person name="Brown J.Y."/>
            <person name="Brown A.J."/>
            <person name="Buckley D."/>
            <person name="Burton J."/>
            <person name="Bye J."/>
            <person name="Carder C."/>
            <person name="Chapman J.C."/>
            <person name="Clark S.Y."/>
            <person name="Clarke G."/>
            <person name="Clee C."/>
            <person name="Cobley V."/>
            <person name="Collier R.E."/>
            <person name="Corby N."/>
            <person name="Coville G.J."/>
            <person name="Davies J."/>
            <person name="Deadman R."/>
            <person name="Dunn M."/>
            <person name="Earthrowl M."/>
            <person name="Ellington A.G."/>
            <person name="Errington H."/>
            <person name="Frankish A."/>
            <person name="Frankland J."/>
            <person name="French L."/>
            <person name="Garner P."/>
            <person name="Garnett J."/>
            <person name="Gay L."/>
            <person name="Ghori M.R.J."/>
            <person name="Gibson R."/>
            <person name="Gilby L.M."/>
            <person name="Gillett W."/>
            <person name="Glithero R.J."/>
            <person name="Grafham D.V."/>
            <person name="Griffiths C."/>
            <person name="Griffiths-Jones S."/>
            <person name="Grocock R."/>
            <person name="Hammond S."/>
            <person name="Harrison E.S.I."/>
            <person name="Hart E."/>
            <person name="Haugen E."/>
            <person name="Heath P.D."/>
            <person name="Holmes S."/>
            <person name="Holt K."/>
            <person name="Howden P.J."/>
            <person name="Hunt A.R."/>
            <person name="Hunt S.E."/>
            <person name="Hunter G."/>
            <person name="Isherwood J."/>
            <person name="James R."/>
            <person name="Johnson C."/>
            <person name="Johnson D."/>
            <person name="Joy A."/>
            <person name="Kay M."/>
            <person name="Kershaw J.K."/>
            <person name="Kibukawa M."/>
            <person name="Kimberley A.M."/>
            <person name="King A."/>
            <person name="Knights A.J."/>
            <person name="Lad H."/>
            <person name="Laird G."/>
            <person name="Lawlor S."/>
            <person name="Leongamornlert D.A."/>
            <person name="Lloyd D.M."/>
            <person name="Loveland J."/>
            <person name="Lovell J."/>
            <person name="Lush M.J."/>
            <person name="Lyne R."/>
            <person name="Martin S."/>
            <person name="Mashreghi-Mohammadi M."/>
            <person name="Matthews L."/>
            <person name="Matthews N.S.W."/>
            <person name="McLaren S."/>
            <person name="Milne S."/>
            <person name="Mistry S."/>
            <person name="Moore M.J.F."/>
            <person name="Nickerson T."/>
            <person name="O'Dell C.N."/>
            <person name="Oliver K."/>
            <person name="Palmeiri A."/>
            <person name="Palmer S.A."/>
            <person name="Parker A."/>
            <person name="Patel D."/>
            <person name="Pearce A.V."/>
            <person name="Peck A.I."/>
            <person name="Pelan S."/>
            <person name="Phelps K."/>
            <person name="Phillimore B.J."/>
            <person name="Plumb R."/>
            <person name="Rajan J."/>
            <person name="Raymond C."/>
            <person name="Rouse G."/>
            <person name="Saenphimmachak C."/>
            <person name="Sehra H.K."/>
            <person name="Sheridan E."/>
            <person name="Shownkeen R."/>
            <person name="Sims S."/>
            <person name="Skuce C.D."/>
            <person name="Smith M."/>
            <person name="Steward C."/>
            <person name="Subramanian S."/>
            <person name="Sycamore N."/>
            <person name="Tracey A."/>
            <person name="Tromans A."/>
            <person name="Van Helmond Z."/>
            <person name="Wall M."/>
            <person name="Wallis J.M."/>
            <person name="White S."/>
            <person name="Whitehead S.L."/>
            <person name="Wilkinson J.E."/>
            <person name="Willey D.L."/>
            <person name="Williams H."/>
            <person name="Wilming L."/>
            <person name="Wray P.W."/>
            <person name="Wu Z."/>
            <person name="Coulson A."/>
            <person name="Vaudin M."/>
            <person name="Sulston J.E."/>
            <person name="Durbin R.M."/>
            <person name="Hubbard T."/>
            <person name="Wooster R."/>
            <person name="Dunham I."/>
            <person name="Carter N.P."/>
            <person name="McVean G."/>
            <person name="Ross M.T."/>
            <person name="Harrow J."/>
            <person name="Olson M.V."/>
            <person name="Beck S."/>
            <person name="Rogers J."/>
            <person name="Bentley D.R."/>
        </authorList>
    </citation>
    <scope>NUCLEOTIDE SEQUENCE [LARGE SCALE GENOMIC DNA]</scope>
</reference>
<reference key="9">
    <citation type="submission" date="2005-07" db="EMBL/GenBank/DDBJ databases">
        <authorList>
            <person name="Mural R.J."/>
            <person name="Istrail S."/>
            <person name="Sutton G.G."/>
            <person name="Florea L."/>
            <person name="Halpern A.L."/>
            <person name="Mobarry C.M."/>
            <person name="Lippert R."/>
            <person name="Walenz B."/>
            <person name="Shatkay H."/>
            <person name="Dew I."/>
            <person name="Miller J.R."/>
            <person name="Flanigan M.J."/>
            <person name="Edwards N.J."/>
            <person name="Bolanos R."/>
            <person name="Fasulo D."/>
            <person name="Halldorsson B.V."/>
            <person name="Hannenhalli S."/>
            <person name="Turner R."/>
            <person name="Yooseph S."/>
            <person name="Lu F."/>
            <person name="Nusskern D.R."/>
            <person name="Shue B.C."/>
            <person name="Zheng X.H."/>
            <person name="Zhong F."/>
            <person name="Delcher A.L."/>
            <person name="Huson D.H."/>
            <person name="Kravitz S.A."/>
            <person name="Mouchard L."/>
            <person name="Reinert K."/>
            <person name="Remington K.A."/>
            <person name="Clark A.G."/>
            <person name="Waterman M.S."/>
            <person name="Eichler E.E."/>
            <person name="Adams M.D."/>
            <person name="Hunkapiller M.W."/>
            <person name="Myers E.W."/>
            <person name="Venter J.C."/>
        </authorList>
    </citation>
    <scope>NUCLEOTIDE SEQUENCE [LARGE SCALE GENOMIC DNA]</scope>
</reference>
<reference key="10">
    <citation type="journal article" date="2004" name="Genome Res.">
        <title>The status, quality, and expansion of the NIH full-length cDNA project: the Mammalian Gene Collection (MGC).</title>
        <authorList>
            <consortium name="The MGC Project Team"/>
        </authorList>
    </citation>
    <scope>NUCLEOTIDE SEQUENCE [LARGE SCALE MRNA] (ISOFORM 1)</scope>
    <source>
        <tissue>Skin</tissue>
        <tissue>Urinary bladder</tissue>
    </source>
</reference>
<reference key="11">
    <citation type="journal article" date="2001" name="Mol. Cell. Endocrinol.">
        <title>17beta-hydroxysteroid dehydrogenase type 7--an ancient 3-ketosteroid reductase of cholesterogenesis.</title>
        <authorList>
            <person name="Breitling R."/>
            <person name="Krazeisen A."/>
            <person name="Moeller G."/>
            <person name="Adamski J."/>
        </authorList>
    </citation>
    <scope>CATALYTIC ACTIVITY</scope>
    <scope>FUNCTION</scope>
</reference>
<reference key="12">
    <citation type="journal article" date="2003" name="J. Clin. Endocrinol. Metab.">
        <title>Sex hormone metabolism in prostate cancer cells during transition to an androgen-independent state.</title>
        <authorList>
            <person name="Haerkoenen P."/>
            <person name="Toern S."/>
            <person name="Kurkela R."/>
            <person name="Porvari K."/>
            <person name="Pulkka A."/>
            <person name="Lindfors A."/>
            <person name="Isomaa V."/>
            <person name="Vihko P."/>
        </authorList>
    </citation>
    <scope>CATALYTIC ACTIVITY</scope>
    <scope>FUNCTION</scope>
</reference>
<reference key="13">
    <citation type="journal article" date="2003" name="Mol. Endocrinol.">
        <title>Closing the gap: identification of human 3-ketosteroid reductase, the last unknown enzyme of mammalian cholesterol biosynthesis.</title>
        <authorList>
            <person name="Marijanovic Z."/>
            <person name="Laubner D."/>
            <person name="Moeller G."/>
            <person name="Gege C."/>
            <person name="Husen B."/>
            <person name="Adamski J."/>
            <person name="Breitling R."/>
        </authorList>
    </citation>
    <scope>CATALYTIC ACTIVITY</scope>
    <scope>FUNCTION</scope>
    <scope>SUBCELLULAR LOCATION</scope>
</reference>
<reference key="14">
    <citation type="journal article" date="2009" name="J. Med. Chem.">
        <title>Potent and selective steroidal inhibitors of 17beta-hydroxysteroid dehydrogenase type 7, an enzyme that catalyzes the reduction of the key hormones estrone and dihydrotestosterone.</title>
        <authorList>
            <person name="Bellavance E."/>
            <person name="Luu-The V."/>
            <person name="Poirier D."/>
        </authorList>
    </citation>
    <scope>ACTIVITY REGULATION</scope>
    <scope>CATALYTIC ACTIVITY</scope>
    <scope>FUNCTION</scope>
</reference>
<reference key="15">
    <citation type="journal article" date="2010" name="Biochim. Biophys. Acta">
        <title>Divergent interactions involving the oxidosqualene cyclase and the steroid-3-ketoreductase in the sterol biosynthetic pathway of mammals and yeasts.</title>
        <authorList>
            <person name="Taramino S."/>
            <person name="Teske B."/>
            <person name="Oliaro-Bosso S."/>
            <person name="Bard M."/>
            <person name="Balliano G."/>
        </authorList>
    </citation>
    <scope>CATALYTIC ACTIVITY</scope>
    <scope>FUNCTION</scope>
</reference>
<reference key="16">
    <citation type="journal article" date="2011" name="BMC Syst. Biol.">
        <title>Initial characterization of the human central proteome.</title>
        <authorList>
            <person name="Burkard T.R."/>
            <person name="Planyavsky M."/>
            <person name="Kaupe I."/>
            <person name="Breitwieser F.P."/>
            <person name="Buerckstuemmer T."/>
            <person name="Bennett K.L."/>
            <person name="Superti-Furga G."/>
            <person name="Colinge J."/>
        </authorList>
    </citation>
    <scope>IDENTIFICATION BY MASS SPECTROMETRY [LARGE SCALE ANALYSIS]</scope>
</reference>
<reference key="17">
    <citation type="journal article" date="2014" name="J. Proteomics">
        <title>An enzyme assisted RP-RPLC approach for in-depth analysis of human liver phosphoproteome.</title>
        <authorList>
            <person name="Bian Y."/>
            <person name="Song C."/>
            <person name="Cheng K."/>
            <person name="Dong M."/>
            <person name="Wang F."/>
            <person name="Huang J."/>
            <person name="Sun D."/>
            <person name="Wang L."/>
            <person name="Ye M."/>
            <person name="Zou H."/>
        </authorList>
    </citation>
    <scope>IDENTIFICATION BY MASS SPECTROMETRY [LARGE SCALE ANALYSIS]</scope>
    <source>
        <tissue>Liver</tissue>
    </source>
</reference>
<organism>
    <name type="scientific">Homo sapiens</name>
    <name type="common">Human</name>
    <dbReference type="NCBI Taxonomy" id="9606"/>
    <lineage>
        <taxon>Eukaryota</taxon>
        <taxon>Metazoa</taxon>
        <taxon>Chordata</taxon>
        <taxon>Craniata</taxon>
        <taxon>Vertebrata</taxon>
        <taxon>Euteleostomi</taxon>
        <taxon>Mammalia</taxon>
        <taxon>Eutheria</taxon>
        <taxon>Euarchontoglires</taxon>
        <taxon>Primates</taxon>
        <taxon>Haplorrhini</taxon>
        <taxon>Catarrhini</taxon>
        <taxon>Hominidae</taxon>
        <taxon>Homo</taxon>
    </lineage>
</organism>
<gene>
    <name type="primary">HSD17B7</name>
    <name evidence="11" type="synonym">17HSD7</name>
    <name type="synonym">SDR37C1</name>
    <name type="ORF">UNQ2563/PRO6243</name>
</gene>
<comment type="function">
    <text evidence="4 5 6 7 8 9">Bifunctional enzyme involved in steroid-hormone metabolism and cholesterol biosynthesis (PubMed:11165030, PubMed:12574203, PubMed:12732193, PubMed:12829805, PubMed:19772289, PubMed:20659585). Catalyzes the NADP(H)-dependent reduction of estrogens and androgens and regulates the biological potency of these steroids. Converts estrone (E1) to a more potent estrogen, 17beta-estradiol (E2) (PubMed:12574203, PubMed:12732193, PubMed:19772289). Converts dihydrotestosterone (DHT) to its inactive form 5a-androstane-3b,17b-diol (PubMed:12574203, PubMed:12732193, PubMed:19772289). Converts moderately progesterone to 3beta-hydroxypregn-4-ene-20-one, leading to its inactivation (PubMed:12574203, PubMed:12732193). Additionally, participates in the post-squalene cholesterol biosynthesis, as a 3-ketosteroid reductase (PubMed:11165030, PubMed:12829805, PubMed:20659585).</text>
</comment>
<comment type="function">
    <molecule>Isoform 3</molecule>
    <text evidence="6">Does not have enzymatic activities toward E1 and DHT.</text>
</comment>
<comment type="catalytic activity">
    <reaction evidence="5 6 8">
        <text>17beta-estradiol + NADP(+) = estrone + NADPH + H(+)</text>
        <dbReference type="Rhea" id="RHEA:24616"/>
        <dbReference type="ChEBI" id="CHEBI:15378"/>
        <dbReference type="ChEBI" id="CHEBI:16469"/>
        <dbReference type="ChEBI" id="CHEBI:17263"/>
        <dbReference type="ChEBI" id="CHEBI:57783"/>
        <dbReference type="ChEBI" id="CHEBI:58349"/>
        <dbReference type="EC" id="1.1.1.62"/>
    </reaction>
    <physiologicalReaction direction="right-to-left" evidence="14 15">
        <dbReference type="Rhea" id="RHEA:24618"/>
    </physiologicalReaction>
</comment>
<comment type="catalytic activity">
    <reaction evidence="7 9">
        <text>a 3beta-hydroxysteroid + NADP(+) = a 3-oxosteroid + NADPH + H(+)</text>
        <dbReference type="Rhea" id="RHEA:34787"/>
        <dbReference type="ChEBI" id="CHEBI:15378"/>
        <dbReference type="ChEBI" id="CHEBI:36836"/>
        <dbReference type="ChEBI" id="CHEBI:47788"/>
        <dbReference type="ChEBI" id="CHEBI:57783"/>
        <dbReference type="ChEBI" id="CHEBI:58349"/>
        <dbReference type="EC" id="1.1.1.270"/>
    </reaction>
    <physiologicalReaction direction="right-to-left" evidence="16 17">
        <dbReference type="Rhea" id="RHEA:34789"/>
    </physiologicalReaction>
</comment>
<comment type="catalytic activity">
    <reaction evidence="9">
        <text>3-dehydro-4alpha-methylzymosterol + NADPH + H(+) = 4alpha-methylzymosterol + NADP(+)</text>
        <dbReference type="Rhea" id="RHEA:36379"/>
        <dbReference type="ChEBI" id="CHEBI:1949"/>
        <dbReference type="ChEBI" id="CHEBI:15378"/>
        <dbReference type="ChEBI" id="CHEBI:57783"/>
        <dbReference type="ChEBI" id="CHEBI:58349"/>
        <dbReference type="ChEBI" id="CHEBI:136486"/>
        <dbReference type="EC" id="1.1.1.270"/>
    </reaction>
    <physiologicalReaction direction="left-to-right" evidence="17">
        <dbReference type="Rhea" id="RHEA:36380"/>
    </physiologicalReaction>
</comment>
<comment type="catalytic activity">
    <reaction evidence="4 7">
        <text>zymosterone + NADPH + H(+) = zymosterol + NADP(+)</text>
        <dbReference type="Rhea" id="RHEA:33459"/>
        <dbReference type="ChEBI" id="CHEBI:15378"/>
        <dbReference type="ChEBI" id="CHEBI:18252"/>
        <dbReference type="ChEBI" id="CHEBI:52386"/>
        <dbReference type="ChEBI" id="CHEBI:57783"/>
        <dbReference type="ChEBI" id="CHEBI:58349"/>
    </reaction>
    <physiologicalReaction direction="left-to-right" evidence="13 16">
        <dbReference type="Rhea" id="RHEA:33460"/>
    </physiologicalReaction>
</comment>
<comment type="catalytic activity">
    <reaction evidence="17">
        <text>4alpha-methyl-5alpha-cholest-8-en-3-one + NADPH + H(+) = 4alpha-methyl-5alpha-cholest-8-en-3beta-ol + NADP(+)</text>
        <dbReference type="Rhea" id="RHEA:46832"/>
        <dbReference type="ChEBI" id="CHEBI:15378"/>
        <dbReference type="ChEBI" id="CHEBI:57783"/>
        <dbReference type="ChEBI" id="CHEBI:58349"/>
        <dbReference type="ChEBI" id="CHEBI:87050"/>
        <dbReference type="ChEBI" id="CHEBI:87051"/>
    </reaction>
    <physiologicalReaction direction="left-to-right" evidence="17">
        <dbReference type="Rhea" id="RHEA:46833"/>
    </physiologicalReaction>
</comment>
<comment type="catalytic activity">
    <reaction evidence="2">
        <text>4alpha-methyl-5alpha-cholest-7-en-3beta-ol + NADP(+) = 4alpha-methyl-5alpha-cholest-7-en-3-one + NADPH + H(+)</text>
        <dbReference type="Rhea" id="RHEA:18409"/>
        <dbReference type="ChEBI" id="CHEBI:15378"/>
        <dbReference type="ChEBI" id="CHEBI:16495"/>
        <dbReference type="ChEBI" id="CHEBI:18378"/>
        <dbReference type="ChEBI" id="CHEBI:57783"/>
        <dbReference type="ChEBI" id="CHEBI:58349"/>
        <dbReference type="EC" id="1.1.1.270"/>
    </reaction>
    <physiologicalReaction direction="right-to-left" evidence="2">
        <dbReference type="Rhea" id="RHEA:18411"/>
    </physiologicalReaction>
</comment>
<comment type="catalytic activity">
    <reaction evidence="4">
        <text>5alpha-cholest-8-en-3-one + NADPH + H(+) = 5alpha-cholest-8-en-3beta-ol + NADP(+)</text>
        <dbReference type="Rhea" id="RHEA:46852"/>
        <dbReference type="ChEBI" id="CHEBI:15378"/>
        <dbReference type="ChEBI" id="CHEBI:16608"/>
        <dbReference type="ChEBI" id="CHEBI:57783"/>
        <dbReference type="ChEBI" id="CHEBI:58349"/>
        <dbReference type="ChEBI" id="CHEBI:87056"/>
    </reaction>
    <physiologicalReaction direction="left-to-right" evidence="13">
        <dbReference type="Rhea" id="RHEA:46853"/>
    </physiologicalReaction>
</comment>
<comment type="catalytic activity">
    <reaction evidence="5 6 8">
        <text>5alpha-androstane-3beta,17beta-diol + NADP(+) = 17beta-hydroxy-5alpha-androstan-3-one + NADPH + H(+)</text>
        <dbReference type="Rhea" id="RHEA:16297"/>
        <dbReference type="ChEBI" id="CHEBI:15378"/>
        <dbReference type="ChEBI" id="CHEBI:16330"/>
        <dbReference type="ChEBI" id="CHEBI:18329"/>
        <dbReference type="ChEBI" id="CHEBI:57783"/>
        <dbReference type="ChEBI" id="CHEBI:58349"/>
        <dbReference type="EC" id="1.1.1.210"/>
    </reaction>
    <physiologicalReaction direction="right-to-left" evidence="6 14">
        <dbReference type="Rhea" id="RHEA:16299"/>
    </physiologicalReaction>
</comment>
<comment type="catalytic activity">
    <reaction evidence="5 6">
        <text>progesterone + NADPH + H(+) = 3beta-hydroxypregn-4-ene-20-one + NADP(+)</text>
        <dbReference type="Rhea" id="RHEA:46216"/>
        <dbReference type="ChEBI" id="CHEBI:15378"/>
        <dbReference type="ChEBI" id="CHEBI:17026"/>
        <dbReference type="ChEBI" id="CHEBI:57783"/>
        <dbReference type="ChEBI" id="CHEBI:58349"/>
        <dbReference type="ChEBI" id="CHEBI:85899"/>
    </reaction>
    <physiologicalReaction direction="left-to-right" evidence="14 15">
        <dbReference type="Rhea" id="RHEA:46217"/>
    </physiologicalReaction>
</comment>
<comment type="activity regulation">
    <text evidence="8">Estradiol 17-beta-dehydrogenase and dihydrotestosterone oxidoreductase activities are selectively inhibited by 4-methyl-4-aza-5alpha-androstane derivatives, such as 17beta-[(N-Heptyl)methylamino]-4-aza-5r-androstan-3-one and 17beta-(N-Decylformamido)-4-aza-5r-androstan-3-one.</text>
</comment>
<comment type="biophysicochemical properties">
    <kinetics>
        <KM evidence="6">3.25 uM for estrone</KM>
        <KM evidence="6">2.6 uM for 17beta-hydroxy-5alpha-androstan-3-one</KM>
    </kinetics>
</comment>
<comment type="pathway">
    <text evidence="5 6 8">Steroid biosynthesis; estrogen biosynthesis.</text>
</comment>
<comment type="pathway">
    <text evidence="4 7">Steroid biosynthesis; zymosterol biosynthesis; zymosterol from lanosterol: step 5/6.</text>
</comment>
<comment type="subunit">
    <text evidence="2">Binds to the short form of prolactin receptor.</text>
</comment>
<comment type="subcellular location">
    <subcellularLocation>
        <location evidence="7">Endoplasmic reticulum membrane</location>
        <topology evidence="3">Single-pass membrane protein</topology>
    </subcellularLocation>
</comment>
<comment type="alternative products">
    <event type="alternative splicing"/>
    <isoform>
        <id>P56937-1</id>
        <name>1</name>
        <sequence type="displayed"/>
    </isoform>
    <isoform>
        <id>P56937-2</id>
        <name>2</name>
        <sequence type="described" ref="VSP_006029"/>
    </isoform>
    <isoform>
        <id>P56937-3</id>
        <name>3</name>
        <sequence type="described" ref="VSP_012766"/>
    </isoform>
</comment>
<comment type="tissue specificity">
    <text evidence="6">Highly expressed in adrenal gland, liver, lung and thymus. Expressed in breast, ovaries, pituitary gland, pregnant uterus, prostate, kidney, lymph node, small intestine, spinal cord and trachea. Weakly expressed in all other tissues tested.</text>
</comment>
<comment type="tissue specificity">
    <molecule>Isoform 3</molecule>
    <text evidence="6">Expressed in eye ciliary epithelial cells and neuroendocrine cells.</text>
</comment>
<comment type="PTM">
    <text evidence="2">Phosphorylated.</text>
</comment>
<comment type="similarity">
    <text evidence="12">Belongs to the short-chain dehydrogenases/reductases (SDR) family. ERG27 subfamily.</text>
</comment>
<proteinExistence type="evidence at protein level"/>
<name>DHB7_HUMAN</name>
<sequence length="341" mass="38206">MRKVVLITGASSGIGLALCKRLLAEDDELHLCLACRNMSKAEAVCAALLASHPTAEVTIVQVDVSNLQSVFRASKELKQRFQRLDCIYLNAGIMPNPQLNIKALFFGLFSRKVIHMFSTAEGLLTQGDKITADGLQEVFETNVFGHFILIRELEPLLCHSDNPSQLIWTSSRSARKSNFSLEDFQHSKGKEPYSSSKYATDLLSVALNRNFNQQGLYSNVACPGTALTNLTYGILPPFIWTLLMPAILLLRFFANAFTLTPYNGTEALVWLFHQKPESLNPLIKYLSATTGFGRNYIMTQKMDLDEDTAEKFYQKLLELEKHIRVTIQKTDNQARLSGSCL</sequence>
<dbReference type="EC" id="1.1.1.270" evidence="4 7 9"/>
<dbReference type="EC" id="1.1.1.210" evidence="5 6 8"/>
<dbReference type="EC" id="1.1.1.62" evidence="5 6 8"/>
<dbReference type="EMBL" id="AF098786">
    <property type="protein sequence ID" value="AAF09266.2"/>
    <property type="molecule type" value="mRNA"/>
</dbReference>
<dbReference type="EMBL" id="AF162767">
    <property type="protein sequence ID" value="AAF14537.1"/>
    <property type="molecule type" value="Genomic_DNA"/>
</dbReference>
<dbReference type="EMBL" id="AF162759">
    <property type="protein sequence ID" value="AAF14537.1"/>
    <property type="status" value="JOINED"/>
    <property type="molecule type" value="Genomic_DNA"/>
</dbReference>
<dbReference type="EMBL" id="AF162760">
    <property type="protein sequence ID" value="AAF14537.1"/>
    <property type="status" value="JOINED"/>
    <property type="molecule type" value="Genomic_DNA"/>
</dbReference>
<dbReference type="EMBL" id="AF162761">
    <property type="protein sequence ID" value="AAF14537.1"/>
    <property type="status" value="JOINED"/>
    <property type="molecule type" value="Genomic_DNA"/>
</dbReference>
<dbReference type="EMBL" id="AF162762">
    <property type="protein sequence ID" value="AAF14537.1"/>
    <property type="status" value="JOINED"/>
    <property type="molecule type" value="Genomic_DNA"/>
</dbReference>
<dbReference type="EMBL" id="AF162763">
    <property type="protein sequence ID" value="AAF14537.1"/>
    <property type="status" value="JOINED"/>
    <property type="molecule type" value="Genomic_DNA"/>
</dbReference>
<dbReference type="EMBL" id="AF162764">
    <property type="protein sequence ID" value="AAF14537.1"/>
    <property type="status" value="JOINED"/>
    <property type="molecule type" value="Genomic_DNA"/>
</dbReference>
<dbReference type="EMBL" id="AF162765">
    <property type="protein sequence ID" value="AAF14537.1"/>
    <property type="status" value="JOINED"/>
    <property type="molecule type" value="Genomic_DNA"/>
</dbReference>
<dbReference type="EMBL" id="AF162766">
    <property type="protein sequence ID" value="AAF14537.1"/>
    <property type="status" value="JOINED"/>
    <property type="molecule type" value="Genomic_DNA"/>
</dbReference>
<dbReference type="EMBL" id="AJ249179">
    <property type="protein sequence ID" value="CAC20418.1"/>
    <property type="molecule type" value="mRNA"/>
</dbReference>
<dbReference type="EMBL" id="AJ250550">
    <property type="protein sequence ID" value="CAC88111.1"/>
    <property type="molecule type" value="Genomic_DNA"/>
</dbReference>
<dbReference type="EMBL" id="AJ250551">
    <property type="protein sequence ID" value="CAC88111.1"/>
    <property type="status" value="JOINED"/>
    <property type="molecule type" value="Genomic_DNA"/>
</dbReference>
<dbReference type="EMBL" id="AJ250552">
    <property type="protein sequence ID" value="CAC88111.1"/>
    <property type="status" value="JOINED"/>
    <property type="molecule type" value="Genomic_DNA"/>
</dbReference>
<dbReference type="EMBL" id="AJ250553">
    <property type="protein sequence ID" value="CAC88111.1"/>
    <property type="status" value="JOINED"/>
    <property type="molecule type" value="Genomic_DNA"/>
</dbReference>
<dbReference type="EMBL" id="AJ250554">
    <property type="protein sequence ID" value="CAC88111.1"/>
    <property type="status" value="JOINED"/>
    <property type="molecule type" value="Genomic_DNA"/>
</dbReference>
<dbReference type="EMBL" id="AJ250555">
    <property type="protein sequence ID" value="CAC88111.1"/>
    <property type="status" value="JOINED"/>
    <property type="molecule type" value="Genomic_DNA"/>
</dbReference>
<dbReference type="EMBL" id="AJ250556">
    <property type="protein sequence ID" value="CAC88111.1"/>
    <property type="status" value="JOINED"/>
    <property type="molecule type" value="Genomic_DNA"/>
</dbReference>
<dbReference type="EMBL" id="AJ250557">
    <property type="protein sequence ID" value="CAC88111.1"/>
    <property type="status" value="JOINED"/>
    <property type="molecule type" value="Genomic_DNA"/>
</dbReference>
<dbReference type="EMBL" id="AJ250558">
    <property type="protein sequence ID" value="CAC88111.1"/>
    <property type="status" value="JOINED"/>
    <property type="molecule type" value="Genomic_DNA"/>
</dbReference>
<dbReference type="EMBL" id="AF145023">
    <property type="protein sequence ID" value="AAP97275.1"/>
    <property type="molecule type" value="mRNA"/>
</dbReference>
<dbReference type="EMBL" id="AY358962">
    <property type="protein sequence ID" value="AAQ89321.1"/>
    <property type="molecule type" value="mRNA"/>
</dbReference>
<dbReference type="EMBL" id="AK290741">
    <property type="protein sequence ID" value="BAF83430.1"/>
    <property type="molecule type" value="mRNA"/>
</dbReference>
<dbReference type="EMBL" id="BT007075">
    <property type="protein sequence ID" value="AAP35738.1"/>
    <property type="molecule type" value="mRNA"/>
</dbReference>
<dbReference type="EMBL" id="AL392003">
    <property type="status" value="NOT_ANNOTATED_CDS"/>
    <property type="molecule type" value="Genomic_DNA"/>
</dbReference>
<dbReference type="EMBL" id="AL445197">
    <property type="status" value="NOT_ANNOTATED_CDS"/>
    <property type="molecule type" value="Genomic_DNA"/>
</dbReference>
<dbReference type="EMBL" id="CH471067">
    <property type="protein sequence ID" value="EAW90716.1"/>
    <property type="molecule type" value="Genomic_DNA"/>
</dbReference>
<dbReference type="EMBL" id="BC007068">
    <property type="protein sequence ID" value="AAH07068.1"/>
    <property type="molecule type" value="mRNA"/>
</dbReference>
<dbReference type="EMBL" id="BC065246">
    <property type="protein sequence ID" value="AAH65246.1"/>
    <property type="molecule type" value="mRNA"/>
</dbReference>
<dbReference type="CCDS" id="CCDS1242.1">
    <molecule id="P56937-1"/>
</dbReference>
<dbReference type="RefSeq" id="NP_001291441.1">
    <property type="nucleotide sequence ID" value="NM_001304512.1"/>
</dbReference>
<dbReference type="RefSeq" id="NP_001291442.1">
    <property type="nucleotide sequence ID" value="NM_001304513.1"/>
</dbReference>
<dbReference type="RefSeq" id="NP_057455.1">
    <molecule id="P56937-1"/>
    <property type="nucleotide sequence ID" value="NM_016371.4"/>
</dbReference>
<dbReference type="SMR" id="P56937"/>
<dbReference type="BioGRID" id="119563">
    <property type="interactions" value="41"/>
</dbReference>
<dbReference type="FunCoup" id="P56937">
    <property type="interactions" value="504"/>
</dbReference>
<dbReference type="IntAct" id="P56937">
    <property type="interactions" value="25"/>
</dbReference>
<dbReference type="STRING" id="9606.ENSP00000254521"/>
<dbReference type="BindingDB" id="P56937"/>
<dbReference type="ChEMBL" id="CHEMBL5999"/>
<dbReference type="DrugBank" id="DB00157">
    <property type="generic name" value="NADH"/>
</dbReference>
<dbReference type="SwissLipids" id="SLP:000001214"/>
<dbReference type="GlyCosmos" id="P56937">
    <property type="glycosylation" value="3 sites, No reported glycans"/>
</dbReference>
<dbReference type="GlyGen" id="P56937">
    <property type="glycosylation" value="3 sites"/>
</dbReference>
<dbReference type="iPTMnet" id="P56937"/>
<dbReference type="PhosphoSitePlus" id="P56937"/>
<dbReference type="SwissPalm" id="P56937"/>
<dbReference type="BioMuta" id="HSD17B7"/>
<dbReference type="DMDM" id="8134404"/>
<dbReference type="jPOST" id="P56937"/>
<dbReference type="MassIVE" id="P56937"/>
<dbReference type="PaxDb" id="9606-ENSP00000254521"/>
<dbReference type="PeptideAtlas" id="P56937"/>
<dbReference type="ProteomicsDB" id="56957">
    <molecule id="P56937-1"/>
</dbReference>
<dbReference type="ProteomicsDB" id="56958">
    <molecule id="P56937-2"/>
</dbReference>
<dbReference type="ProteomicsDB" id="56959">
    <molecule id="P56937-3"/>
</dbReference>
<dbReference type="Pumba" id="P56937"/>
<dbReference type="Antibodypedia" id="34324">
    <property type="antibodies" value="162 antibodies from 27 providers"/>
</dbReference>
<dbReference type="DNASU" id="51478"/>
<dbReference type="Ensembl" id="ENST00000254521.8">
    <molecule id="P56937-1"/>
    <property type="protein sequence ID" value="ENSP00000254521.3"/>
    <property type="gene ID" value="ENSG00000132196.16"/>
</dbReference>
<dbReference type="GeneID" id="51478"/>
<dbReference type="KEGG" id="hsa:51478"/>
<dbReference type="MANE-Select" id="ENST00000254521.8">
    <property type="protein sequence ID" value="ENSP00000254521.3"/>
    <property type="RefSeq nucleotide sequence ID" value="NM_016371.4"/>
    <property type="RefSeq protein sequence ID" value="NP_057455.1"/>
</dbReference>
<dbReference type="UCSC" id="uc001gci.4">
    <molecule id="P56937-1"/>
    <property type="organism name" value="human"/>
</dbReference>
<dbReference type="AGR" id="HGNC:5215"/>
<dbReference type="CTD" id="51478"/>
<dbReference type="DisGeNET" id="51478"/>
<dbReference type="GeneCards" id="HSD17B7"/>
<dbReference type="HGNC" id="HGNC:5215">
    <property type="gene designation" value="HSD17B7"/>
</dbReference>
<dbReference type="HPA" id="ENSG00000132196">
    <property type="expression patterns" value="Tissue enhanced (liver)"/>
</dbReference>
<dbReference type="MIM" id="606756">
    <property type="type" value="gene"/>
</dbReference>
<dbReference type="neXtProt" id="NX_P56937"/>
<dbReference type="OpenTargets" id="ENSG00000132196"/>
<dbReference type="PharmGKB" id="PA29483"/>
<dbReference type="VEuPathDB" id="HostDB:ENSG00000132196"/>
<dbReference type="eggNOG" id="KOG1478">
    <property type="taxonomic scope" value="Eukaryota"/>
</dbReference>
<dbReference type="GeneTree" id="ENSGT00390000013340"/>
<dbReference type="HOGENOM" id="CLU_029944_2_0_1"/>
<dbReference type="InParanoid" id="P56937"/>
<dbReference type="OMA" id="WHNIDGY"/>
<dbReference type="OrthoDB" id="9989144at2759"/>
<dbReference type="PAN-GO" id="P56937">
    <property type="GO annotations" value="5 GO annotations based on evolutionary models"/>
</dbReference>
<dbReference type="PhylomeDB" id="P56937"/>
<dbReference type="TreeFam" id="TF105433"/>
<dbReference type="BioCyc" id="MetaCyc:HS05604-MONOMER"/>
<dbReference type="BRENDA" id="1.1.1.270">
    <property type="organism ID" value="2681"/>
</dbReference>
<dbReference type="BRENDA" id="1.1.1.62">
    <property type="organism ID" value="2681"/>
</dbReference>
<dbReference type="PathwayCommons" id="P56937"/>
<dbReference type="Reactome" id="R-HSA-191273">
    <property type="pathway name" value="Cholesterol biosynthesis"/>
</dbReference>
<dbReference type="SABIO-RK" id="P56937"/>
<dbReference type="SignaLink" id="P56937"/>
<dbReference type="UniPathway" id="UPA00769"/>
<dbReference type="UniPathway" id="UPA00770">
    <property type="reaction ID" value="UER00758"/>
</dbReference>
<dbReference type="BioGRID-ORCS" id="51478">
    <property type="hits" value="28 hits in 1125 CRISPR screens"/>
</dbReference>
<dbReference type="GeneWiki" id="HSD17B7"/>
<dbReference type="GenomeRNAi" id="51478"/>
<dbReference type="Pharos" id="P56937">
    <property type="development level" value="Tchem"/>
</dbReference>
<dbReference type="PRO" id="PR:P56937"/>
<dbReference type="Proteomes" id="UP000005640">
    <property type="component" value="Chromosome 1"/>
</dbReference>
<dbReference type="RNAct" id="P56937">
    <property type="molecule type" value="protein"/>
</dbReference>
<dbReference type="Bgee" id="ENSG00000132196">
    <property type="expression patterns" value="Expressed in adrenal tissue and 105 other cell types or tissues"/>
</dbReference>
<dbReference type="ExpressionAtlas" id="P56937">
    <property type="expression patterns" value="baseline and differential"/>
</dbReference>
<dbReference type="GO" id="GO:0005789">
    <property type="term" value="C:endoplasmic reticulum membrane"/>
    <property type="evidence" value="ECO:0000314"/>
    <property type="project" value="UniProtKB"/>
</dbReference>
<dbReference type="GO" id="GO:0005739">
    <property type="term" value="C:mitochondrion"/>
    <property type="evidence" value="ECO:0006056"/>
    <property type="project" value="FlyBase"/>
</dbReference>
<dbReference type="GO" id="GO:0000253">
    <property type="term" value="F:3-beta-hydroxysteroid 3-dehydrogenase (NADP+) activity"/>
    <property type="evidence" value="ECO:0000314"/>
    <property type="project" value="UniProtKB"/>
</dbReference>
<dbReference type="GO" id="GO:0047024">
    <property type="term" value="F:5-alpha-androstane-3-beta,17-beta-diol dehydrogenase (NADP+) activity"/>
    <property type="evidence" value="ECO:0000314"/>
    <property type="project" value="UniProtKB"/>
</dbReference>
<dbReference type="GO" id="GO:0004303">
    <property type="term" value="F:estradiol 17-beta-dehydrogenase [NAD(P)+] activity"/>
    <property type="evidence" value="ECO:0000314"/>
    <property type="project" value="UniProtKB"/>
</dbReference>
<dbReference type="GO" id="GO:0008209">
    <property type="term" value="P:androgen metabolic process"/>
    <property type="evidence" value="ECO:0000314"/>
    <property type="project" value="UniProtKB"/>
</dbReference>
<dbReference type="GO" id="GO:0007420">
    <property type="term" value="P:brain development"/>
    <property type="evidence" value="ECO:0007669"/>
    <property type="project" value="Ensembl"/>
</dbReference>
<dbReference type="GO" id="GO:0030154">
    <property type="term" value="P:cell differentiation"/>
    <property type="evidence" value="ECO:0007669"/>
    <property type="project" value="Ensembl"/>
</dbReference>
<dbReference type="GO" id="GO:0006695">
    <property type="term" value="P:cholesterol biosynthetic process"/>
    <property type="evidence" value="ECO:0000314"/>
    <property type="project" value="UniProtKB"/>
</dbReference>
<dbReference type="GO" id="GO:0048568">
    <property type="term" value="P:embryonic organ development"/>
    <property type="evidence" value="ECO:0007669"/>
    <property type="project" value="Ensembl"/>
</dbReference>
<dbReference type="GO" id="GO:0048706">
    <property type="term" value="P:embryonic skeletal system development"/>
    <property type="evidence" value="ECO:0007669"/>
    <property type="project" value="Ensembl"/>
</dbReference>
<dbReference type="GO" id="GO:0006703">
    <property type="term" value="P:estrogen biosynthetic process"/>
    <property type="evidence" value="ECO:0000314"/>
    <property type="project" value="UniProtKB"/>
</dbReference>
<dbReference type="CDD" id="cd08941">
    <property type="entry name" value="3KS_SDR_c"/>
    <property type="match status" value="1"/>
</dbReference>
<dbReference type="FunFam" id="3.40.50.720:FF:000289">
    <property type="entry name" value="Hydroxysteroid 17-beta dehydrogenase 7"/>
    <property type="match status" value="1"/>
</dbReference>
<dbReference type="Gene3D" id="3.40.50.720">
    <property type="entry name" value="NAD(P)-binding Rossmann-like Domain"/>
    <property type="match status" value="1"/>
</dbReference>
<dbReference type="InterPro" id="IPR052834">
    <property type="entry name" value="3KSR/17beta-HSD"/>
</dbReference>
<dbReference type="InterPro" id="IPR042829">
    <property type="entry name" value="HSD17B7/Erg27"/>
</dbReference>
<dbReference type="InterPro" id="IPR036291">
    <property type="entry name" value="NAD(P)-bd_dom_sf"/>
</dbReference>
<dbReference type="InterPro" id="IPR002347">
    <property type="entry name" value="SDR_fam"/>
</dbReference>
<dbReference type="PANTHER" id="PTHR44442">
    <property type="entry name" value="3-KETO-STEROID REDUCTASE"/>
    <property type="match status" value="1"/>
</dbReference>
<dbReference type="PANTHER" id="PTHR44442:SF1">
    <property type="entry name" value="3-KETO-STEROID REDUCTASE_17-BETA-HYDROXYSTEROID DEHYDROGENASE 7"/>
    <property type="match status" value="1"/>
</dbReference>
<dbReference type="Pfam" id="PF00106">
    <property type="entry name" value="adh_short"/>
    <property type="match status" value="1"/>
</dbReference>
<dbReference type="PRINTS" id="PR00081">
    <property type="entry name" value="GDHRDH"/>
</dbReference>
<dbReference type="SUPFAM" id="SSF51735">
    <property type="entry name" value="NAD(P)-binding Rossmann-fold domains"/>
    <property type="match status" value="1"/>
</dbReference>